<protein>
    <recommendedName>
        <fullName evidence="1">7-cyano-7-deazaguanine synthase</fullName>
        <ecNumber evidence="1">6.3.4.20</ecNumber>
    </recommendedName>
    <alternativeName>
        <fullName evidence="1">7-cyano-7-carbaguanine synthase</fullName>
    </alternativeName>
    <alternativeName>
        <fullName evidence="1">PreQ(0) synthase</fullName>
    </alternativeName>
    <alternativeName>
        <fullName evidence="1">Queuosine biosynthesis protein QueC</fullName>
    </alternativeName>
</protein>
<evidence type="ECO:0000255" key="1">
    <source>
        <dbReference type="HAMAP-Rule" id="MF_01633"/>
    </source>
</evidence>
<feature type="chain" id="PRO_0000246828" description="7-cyano-7-deazaguanine synthase">
    <location>
        <begin position="1"/>
        <end position="234"/>
    </location>
</feature>
<feature type="binding site" evidence="1">
    <location>
        <begin position="13"/>
        <end position="23"/>
    </location>
    <ligand>
        <name>ATP</name>
        <dbReference type="ChEBI" id="CHEBI:30616"/>
    </ligand>
</feature>
<feature type="binding site" evidence="1">
    <location>
        <position position="193"/>
    </location>
    <ligand>
        <name>Zn(2+)</name>
        <dbReference type="ChEBI" id="CHEBI:29105"/>
    </ligand>
</feature>
<feature type="binding site" evidence="1">
    <location>
        <position position="201"/>
    </location>
    <ligand>
        <name>Zn(2+)</name>
        <dbReference type="ChEBI" id="CHEBI:29105"/>
    </ligand>
</feature>
<feature type="binding site" evidence="1">
    <location>
        <position position="204"/>
    </location>
    <ligand>
        <name>Zn(2+)</name>
        <dbReference type="ChEBI" id="CHEBI:29105"/>
    </ligand>
</feature>
<feature type="binding site" evidence="1">
    <location>
        <position position="207"/>
    </location>
    <ligand>
        <name>Zn(2+)</name>
        <dbReference type="ChEBI" id="CHEBI:29105"/>
    </ligand>
</feature>
<dbReference type="EC" id="6.3.4.20" evidence="1"/>
<dbReference type="EMBL" id="AE016825">
    <property type="protein sequence ID" value="AAQ61168.1"/>
    <property type="molecule type" value="Genomic_DNA"/>
</dbReference>
<dbReference type="RefSeq" id="WP_011137054.1">
    <property type="nucleotide sequence ID" value="NC_005085.1"/>
</dbReference>
<dbReference type="SMR" id="Q7NSB9"/>
<dbReference type="STRING" id="243365.CV_3507"/>
<dbReference type="KEGG" id="cvi:CV_3507"/>
<dbReference type="eggNOG" id="COG0603">
    <property type="taxonomic scope" value="Bacteria"/>
</dbReference>
<dbReference type="HOGENOM" id="CLU_081854_0_0_4"/>
<dbReference type="OrthoDB" id="9789567at2"/>
<dbReference type="UniPathway" id="UPA00391"/>
<dbReference type="Proteomes" id="UP000001424">
    <property type="component" value="Chromosome"/>
</dbReference>
<dbReference type="GO" id="GO:0005524">
    <property type="term" value="F:ATP binding"/>
    <property type="evidence" value="ECO:0007669"/>
    <property type="project" value="UniProtKB-UniRule"/>
</dbReference>
<dbReference type="GO" id="GO:0016879">
    <property type="term" value="F:ligase activity, forming carbon-nitrogen bonds"/>
    <property type="evidence" value="ECO:0007669"/>
    <property type="project" value="UniProtKB-UniRule"/>
</dbReference>
<dbReference type="GO" id="GO:0008270">
    <property type="term" value="F:zinc ion binding"/>
    <property type="evidence" value="ECO:0007669"/>
    <property type="project" value="UniProtKB-UniRule"/>
</dbReference>
<dbReference type="GO" id="GO:0008616">
    <property type="term" value="P:queuosine biosynthetic process"/>
    <property type="evidence" value="ECO:0007669"/>
    <property type="project" value="UniProtKB-UniRule"/>
</dbReference>
<dbReference type="CDD" id="cd01995">
    <property type="entry name" value="QueC-like"/>
    <property type="match status" value="1"/>
</dbReference>
<dbReference type="Gene3D" id="3.40.50.620">
    <property type="entry name" value="HUPs"/>
    <property type="match status" value="1"/>
</dbReference>
<dbReference type="HAMAP" id="MF_01633">
    <property type="entry name" value="QueC"/>
    <property type="match status" value="1"/>
</dbReference>
<dbReference type="InterPro" id="IPR018317">
    <property type="entry name" value="QueC"/>
</dbReference>
<dbReference type="InterPro" id="IPR014729">
    <property type="entry name" value="Rossmann-like_a/b/a_fold"/>
</dbReference>
<dbReference type="NCBIfam" id="TIGR00364">
    <property type="entry name" value="7-cyano-7-deazaguanine synthase QueC"/>
    <property type="match status" value="1"/>
</dbReference>
<dbReference type="PANTHER" id="PTHR42914">
    <property type="entry name" value="7-CYANO-7-DEAZAGUANINE SYNTHASE"/>
    <property type="match status" value="1"/>
</dbReference>
<dbReference type="PANTHER" id="PTHR42914:SF1">
    <property type="entry name" value="7-CYANO-7-DEAZAGUANINE SYNTHASE"/>
    <property type="match status" value="1"/>
</dbReference>
<dbReference type="Pfam" id="PF06508">
    <property type="entry name" value="QueC"/>
    <property type="match status" value="1"/>
</dbReference>
<dbReference type="PIRSF" id="PIRSF006293">
    <property type="entry name" value="ExsB"/>
    <property type="match status" value="1"/>
</dbReference>
<dbReference type="SUPFAM" id="SSF52402">
    <property type="entry name" value="Adenine nucleotide alpha hydrolases-like"/>
    <property type="match status" value="1"/>
</dbReference>
<accession>Q7NSB9</accession>
<proteinExistence type="inferred from homology"/>
<organism>
    <name type="scientific">Chromobacterium violaceum (strain ATCC 12472 / DSM 30191 / JCM 1249 / CCUG 213 / NBRC 12614 / NCIMB 9131 / NCTC 9757 / MK)</name>
    <dbReference type="NCBI Taxonomy" id="243365"/>
    <lineage>
        <taxon>Bacteria</taxon>
        <taxon>Pseudomonadati</taxon>
        <taxon>Pseudomonadota</taxon>
        <taxon>Betaproteobacteria</taxon>
        <taxon>Neisseriales</taxon>
        <taxon>Chromobacteriaceae</taxon>
        <taxon>Chromobacterium</taxon>
    </lineage>
</organism>
<name>QUEC_CHRVO</name>
<gene>
    <name evidence="1" type="primary">queC</name>
    <name type="ordered locus">CV_3507</name>
</gene>
<reference key="1">
    <citation type="journal article" date="2003" name="Proc. Natl. Acad. Sci. U.S.A.">
        <title>The complete genome sequence of Chromobacterium violaceum reveals remarkable and exploitable bacterial adaptability.</title>
        <authorList>
            <person name="Vasconcelos A.T.R."/>
            <person name="de Almeida D.F."/>
            <person name="Hungria M."/>
            <person name="Guimaraes C.T."/>
            <person name="Antonio R.V."/>
            <person name="Almeida F.C."/>
            <person name="de Almeida L.G.P."/>
            <person name="de Almeida R."/>
            <person name="Alves-Gomes J.A."/>
            <person name="Andrade E.M."/>
            <person name="Araripe J."/>
            <person name="de Araujo M.F.F."/>
            <person name="Astolfi-Filho S."/>
            <person name="Azevedo V."/>
            <person name="Baptista A.J."/>
            <person name="Bataus L.A.M."/>
            <person name="Batista J.S."/>
            <person name="Belo A."/>
            <person name="van den Berg C."/>
            <person name="Bogo M."/>
            <person name="Bonatto S."/>
            <person name="Bordignon J."/>
            <person name="Brigido M.M."/>
            <person name="Brito C.A."/>
            <person name="Brocchi M."/>
            <person name="Burity H.A."/>
            <person name="Camargo A.A."/>
            <person name="Cardoso D.D.P."/>
            <person name="Carneiro N.P."/>
            <person name="Carraro D.M."/>
            <person name="Carvalho C.M.B."/>
            <person name="Cascardo J.C.M."/>
            <person name="Cavada B.S."/>
            <person name="Chueire L.M.O."/>
            <person name="Creczynski-Pasa T.B."/>
            <person name="Cunha-Junior N.C."/>
            <person name="Fagundes N."/>
            <person name="Falcao C.L."/>
            <person name="Fantinatti F."/>
            <person name="Farias I.P."/>
            <person name="Felipe M.S.S."/>
            <person name="Ferrari L.P."/>
            <person name="Ferro J.A."/>
            <person name="Ferro M.I.T."/>
            <person name="Franco G.R."/>
            <person name="Freitas N.S.A."/>
            <person name="Furlan L.R."/>
            <person name="Gazzinelli R.T."/>
            <person name="Gomes E.A."/>
            <person name="Goncalves P.R."/>
            <person name="Grangeiro T.B."/>
            <person name="Grattapaglia D."/>
            <person name="Grisard E.C."/>
            <person name="Hanna E.S."/>
            <person name="Jardim S.N."/>
            <person name="Laurino J."/>
            <person name="Leoi L.C.T."/>
            <person name="Lima L.F.A."/>
            <person name="Loureiro M.F."/>
            <person name="Lyra M.C.C.P."/>
            <person name="Madeira H.M.F."/>
            <person name="Manfio G.P."/>
            <person name="Maranhao A.Q."/>
            <person name="Martins W.S."/>
            <person name="di Mauro S.M.Z."/>
            <person name="de Medeiros S.R.B."/>
            <person name="Meissner R.V."/>
            <person name="Moreira M.A.M."/>
            <person name="Nascimento F.F."/>
            <person name="Nicolas M.F."/>
            <person name="Oliveira J.G."/>
            <person name="Oliveira S.C."/>
            <person name="Paixao R.F.C."/>
            <person name="Parente J.A."/>
            <person name="Pedrosa F.O."/>
            <person name="Pena S.D.J."/>
            <person name="Pereira J.O."/>
            <person name="Pereira M."/>
            <person name="Pinto L.S.R.C."/>
            <person name="Pinto L.S."/>
            <person name="Porto J.I.R."/>
            <person name="Potrich D.P."/>
            <person name="Ramalho-Neto C.E."/>
            <person name="Reis A.M.M."/>
            <person name="Rigo L.U."/>
            <person name="Rondinelli E."/>
            <person name="Santos E.B.P."/>
            <person name="Santos F.R."/>
            <person name="Schneider M.P.C."/>
            <person name="Seuanez H.N."/>
            <person name="Silva A.M.R."/>
            <person name="da Silva A.L.C."/>
            <person name="Silva D.W."/>
            <person name="Silva R."/>
            <person name="Simoes I.C."/>
            <person name="Simon D."/>
            <person name="Soares C.M.A."/>
            <person name="Soares R.B.A."/>
            <person name="Souza E.M."/>
            <person name="Souza K.R.L."/>
            <person name="Souza R.C."/>
            <person name="Steffens M.B.R."/>
            <person name="Steindel M."/>
            <person name="Teixeira S.R."/>
            <person name="Urmenyi T."/>
            <person name="Vettore A."/>
            <person name="Wassem R."/>
            <person name="Zaha A."/>
            <person name="Simpson A.J.G."/>
        </authorList>
    </citation>
    <scope>NUCLEOTIDE SEQUENCE [LARGE SCALE GENOMIC DNA]</scope>
    <source>
        <strain>ATCC 12472 / DSM 30191 / JCM 1249 / CCUG 213 / NBRC 12614 / NCIMB 9131 / NCTC 9757 / MK</strain>
    </source>
</reference>
<sequence>MNQASDEKALVVLSGGQDSTTCLYWALRRFGAGKVEAVTFDYGQRHRVELDCARKIAALAGVRQTVLPIDTFAAIGGNALTDASIAPEEGVRDDDALPNTFVPGRNLVFLTFAAAFAYTRGARHLVTGVAQTDYSGYPDCRENTLKALEVALRLGMDSRVELHTPLMYLSKAETVTLAQQVGALEALAWSHTCYNGEVPPCGHCASCELRAKGFAEAGVPDPLVERCQAEAQGL</sequence>
<comment type="function">
    <text evidence="1">Catalyzes the ATP-dependent conversion of 7-carboxy-7-deazaguanine (CDG) to 7-cyano-7-deazaguanine (preQ(0)).</text>
</comment>
<comment type="catalytic activity">
    <reaction evidence="1">
        <text>7-carboxy-7-deazaguanine + NH4(+) + ATP = 7-cyano-7-deazaguanine + ADP + phosphate + H2O + H(+)</text>
        <dbReference type="Rhea" id="RHEA:27982"/>
        <dbReference type="ChEBI" id="CHEBI:15377"/>
        <dbReference type="ChEBI" id="CHEBI:15378"/>
        <dbReference type="ChEBI" id="CHEBI:28938"/>
        <dbReference type="ChEBI" id="CHEBI:30616"/>
        <dbReference type="ChEBI" id="CHEBI:43474"/>
        <dbReference type="ChEBI" id="CHEBI:45075"/>
        <dbReference type="ChEBI" id="CHEBI:61036"/>
        <dbReference type="ChEBI" id="CHEBI:456216"/>
        <dbReference type="EC" id="6.3.4.20"/>
    </reaction>
</comment>
<comment type="cofactor">
    <cofactor evidence="1">
        <name>Zn(2+)</name>
        <dbReference type="ChEBI" id="CHEBI:29105"/>
    </cofactor>
    <text evidence="1">Binds 1 zinc ion per subunit.</text>
</comment>
<comment type="pathway">
    <text evidence="1">Purine metabolism; 7-cyano-7-deazaguanine biosynthesis.</text>
</comment>
<comment type="similarity">
    <text evidence="1">Belongs to the QueC family.</text>
</comment>
<keyword id="KW-0067">ATP-binding</keyword>
<keyword id="KW-0436">Ligase</keyword>
<keyword id="KW-0479">Metal-binding</keyword>
<keyword id="KW-0547">Nucleotide-binding</keyword>
<keyword id="KW-0671">Queuosine biosynthesis</keyword>
<keyword id="KW-1185">Reference proteome</keyword>
<keyword id="KW-0862">Zinc</keyword>